<organism>
    <name type="scientific">Sulfurimonas denitrificans (strain ATCC 33889 / DSM 1251)</name>
    <name type="common">Thiomicrospira denitrificans (strain ATCC 33889 / DSM 1251)</name>
    <dbReference type="NCBI Taxonomy" id="326298"/>
    <lineage>
        <taxon>Bacteria</taxon>
        <taxon>Pseudomonadati</taxon>
        <taxon>Campylobacterota</taxon>
        <taxon>Epsilonproteobacteria</taxon>
        <taxon>Campylobacterales</taxon>
        <taxon>Sulfurimonadaceae</taxon>
        <taxon>Sulfurimonas</taxon>
    </lineage>
</organism>
<dbReference type="EC" id="2.8.4.3" evidence="1"/>
<dbReference type="EMBL" id="CP000153">
    <property type="protein sequence ID" value="ABB45020.1"/>
    <property type="molecule type" value="Genomic_DNA"/>
</dbReference>
<dbReference type="RefSeq" id="WP_011373361.1">
    <property type="nucleotide sequence ID" value="NC_007575.1"/>
</dbReference>
<dbReference type="SMR" id="Q30PR1"/>
<dbReference type="STRING" id="326298.Suden_1746"/>
<dbReference type="KEGG" id="tdn:Suden_1746"/>
<dbReference type="eggNOG" id="COG0621">
    <property type="taxonomic scope" value="Bacteria"/>
</dbReference>
<dbReference type="HOGENOM" id="CLU_018697_2_0_7"/>
<dbReference type="OrthoDB" id="9805215at2"/>
<dbReference type="Proteomes" id="UP000002714">
    <property type="component" value="Chromosome"/>
</dbReference>
<dbReference type="GO" id="GO:0005829">
    <property type="term" value="C:cytosol"/>
    <property type="evidence" value="ECO:0007669"/>
    <property type="project" value="TreeGrafter"/>
</dbReference>
<dbReference type="GO" id="GO:0051539">
    <property type="term" value="F:4 iron, 4 sulfur cluster binding"/>
    <property type="evidence" value="ECO:0007669"/>
    <property type="project" value="UniProtKB-UniRule"/>
</dbReference>
<dbReference type="GO" id="GO:0046872">
    <property type="term" value="F:metal ion binding"/>
    <property type="evidence" value="ECO:0007669"/>
    <property type="project" value="UniProtKB-KW"/>
</dbReference>
<dbReference type="GO" id="GO:0035597">
    <property type="term" value="F:N6-isopentenyladenosine methylthiotransferase activity"/>
    <property type="evidence" value="ECO:0007669"/>
    <property type="project" value="TreeGrafter"/>
</dbReference>
<dbReference type="CDD" id="cd01335">
    <property type="entry name" value="Radical_SAM"/>
    <property type="match status" value="1"/>
</dbReference>
<dbReference type="FunFam" id="3.40.50.12160:FF:000003">
    <property type="entry name" value="CDK5 regulatory subunit-associated protein 1"/>
    <property type="match status" value="1"/>
</dbReference>
<dbReference type="FunFam" id="3.80.30.20:FF:000001">
    <property type="entry name" value="tRNA-2-methylthio-N(6)-dimethylallyladenosine synthase 2"/>
    <property type="match status" value="1"/>
</dbReference>
<dbReference type="Gene3D" id="3.40.50.12160">
    <property type="entry name" value="Methylthiotransferase, N-terminal domain"/>
    <property type="match status" value="1"/>
</dbReference>
<dbReference type="Gene3D" id="3.80.30.20">
    <property type="entry name" value="tm_1862 like domain"/>
    <property type="match status" value="1"/>
</dbReference>
<dbReference type="HAMAP" id="MF_01864">
    <property type="entry name" value="tRNA_metthiotr_MiaB"/>
    <property type="match status" value="1"/>
</dbReference>
<dbReference type="InterPro" id="IPR006638">
    <property type="entry name" value="Elp3/MiaA/NifB-like_rSAM"/>
</dbReference>
<dbReference type="InterPro" id="IPR005839">
    <property type="entry name" value="Methylthiotransferase"/>
</dbReference>
<dbReference type="InterPro" id="IPR020612">
    <property type="entry name" value="Methylthiotransferase_CS"/>
</dbReference>
<dbReference type="InterPro" id="IPR013848">
    <property type="entry name" value="Methylthiotransferase_N"/>
</dbReference>
<dbReference type="InterPro" id="IPR038135">
    <property type="entry name" value="Methylthiotransferase_N_sf"/>
</dbReference>
<dbReference type="InterPro" id="IPR006463">
    <property type="entry name" value="MiaB_methiolase"/>
</dbReference>
<dbReference type="InterPro" id="IPR007197">
    <property type="entry name" value="rSAM"/>
</dbReference>
<dbReference type="InterPro" id="IPR023404">
    <property type="entry name" value="rSAM_horseshoe"/>
</dbReference>
<dbReference type="InterPro" id="IPR002792">
    <property type="entry name" value="TRAM_dom"/>
</dbReference>
<dbReference type="NCBIfam" id="TIGR01574">
    <property type="entry name" value="miaB-methiolase"/>
    <property type="match status" value="1"/>
</dbReference>
<dbReference type="NCBIfam" id="TIGR00089">
    <property type="entry name" value="MiaB/RimO family radical SAM methylthiotransferase"/>
    <property type="match status" value="1"/>
</dbReference>
<dbReference type="PANTHER" id="PTHR43020">
    <property type="entry name" value="CDK5 REGULATORY SUBUNIT-ASSOCIATED PROTEIN 1"/>
    <property type="match status" value="1"/>
</dbReference>
<dbReference type="PANTHER" id="PTHR43020:SF2">
    <property type="entry name" value="MITOCHONDRIAL TRNA METHYLTHIOTRANSFERASE CDK5RAP1"/>
    <property type="match status" value="1"/>
</dbReference>
<dbReference type="Pfam" id="PF04055">
    <property type="entry name" value="Radical_SAM"/>
    <property type="match status" value="1"/>
</dbReference>
<dbReference type="Pfam" id="PF01938">
    <property type="entry name" value="TRAM"/>
    <property type="match status" value="1"/>
</dbReference>
<dbReference type="Pfam" id="PF00919">
    <property type="entry name" value="UPF0004"/>
    <property type="match status" value="1"/>
</dbReference>
<dbReference type="SFLD" id="SFLDF00273">
    <property type="entry name" value="(dimethylallyl)adenosine_tRNA"/>
    <property type="match status" value="1"/>
</dbReference>
<dbReference type="SFLD" id="SFLDG01082">
    <property type="entry name" value="B12-binding_domain_containing"/>
    <property type="match status" value="1"/>
</dbReference>
<dbReference type="SFLD" id="SFLDG01061">
    <property type="entry name" value="methylthiotransferase"/>
    <property type="match status" value="1"/>
</dbReference>
<dbReference type="SMART" id="SM00729">
    <property type="entry name" value="Elp3"/>
    <property type="match status" value="1"/>
</dbReference>
<dbReference type="SUPFAM" id="SSF102114">
    <property type="entry name" value="Radical SAM enzymes"/>
    <property type="match status" value="1"/>
</dbReference>
<dbReference type="PROSITE" id="PS51449">
    <property type="entry name" value="MTTASE_N"/>
    <property type="match status" value="1"/>
</dbReference>
<dbReference type="PROSITE" id="PS01278">
    <property type="entry name" value="MTTASE_RADICAL"/>
    <property type="match status" value="1"/>
</dbReference>
<dbReference type="PROSITE" id="PS51918">
    <property type="entry name" value="RADICAL_SAM"/>
    <property type="match status" value="1"/>
</dbReference>
<dbReference type="PROSITE" id="PS50926">
    <property type="entry name" value="TRAM"/>
    <property type="match status" value="1"/>
</dbReference>
<proteinExistence type="inferred from homology"/>
<evidence type="ECO:0000255" key="1">
    <source>
        <dbReference type="HAMAP-Rule" id="MF_01864"/>
    </source>
</evidence>
<evidence type="ECO:0000255" key="2">
    <source>
        <dbReference type="PROSITE-ProRule" id="PRU01266"/>
    </source>
</evidence>
<gene>
    <name evidence="1" type="primary">miaB</name>
    <name type="ordered locus">Suden_1746</name>
</gene>
<comment type="function">
    <text evidence="1">Catalyzes the methylthiolation of N6-(dimethylallyl)adenosine (i(6)A), leading to the formation of 2-methylthio-N6-(dimethylallyl)adenosine (ms(2)i(6)A) at position 37 in tRNAs that read codons beginning with uridine.</text>
</comment>
<comment type="catalytic activity">
    <reaction evidence="1">
        <text>N(6)-dimethylallyladenosine(37) in tRNA + (sulfur carrier)-SH + AH2 + 2 S-adenosyl-L-methionine = 2-methylsulfanyl-N(6)-dimethylallyladenosine(37) in tRNA + (sulfur carrier)-H + 5'-deoxyadenosine + L-methionine + A + S-adenosyl-L-homocysteine + 2 H(+)</text>
        <dbReference type="Rhea" id="RHEA:37067"/>
        <dbReference type="Rhea" id="RHEA-COMP:10375"/>
        <dbReference type="Rhea" id="RHEA-COMP:10376"/>
        <dbReference type="Rhea" id="RHEA-COMP:14737"/>
        <dbReference type="Rhea" id="RHEA-COMP:14739"/>
        <dbReference type="ChEBI" id="CHEBI:13193"/>
        <dbReference type="ChEBI" id="CHEBI:15378"/>
        <dbReference type="ChEBI" id="CHEBI:17319"/>
        <dbReference type="ChEBI" id="CHEBI:17499"/>
        <dbReference type="ChEBI" id="CHEBI:29917"/>
        <dbReference type="ChEBI" id="CHEBI:57844"/>
        <dbReference type="ChEBI" id="CHEBI:57856"/>
        <dbReference type="ChEBI" id="CHEBI:59789"/>
        <dbReference type="ChEBI" id="CHEBI:64428"/>
        <dbReference type="ChEBI" id="CHEBI:74415"/>
        <dbReference type="ChEBI" id="CHEBI:74417"/>
        <dbReference type="EC" id="2.8.4.3"/>
    </reaction>
</comment>
<comment type="cofactor">
    <cofactor evidence="1">
        <name>[4Fe-4S] cluster</name>
        <dbReference type="ChEBI" id="CHEBI:49883"/>
    </cofactor>
    <text evidence="1">Binds 2 [4Fe-4S] clusters. One cluster is coordinated with 3 cysteines and an exchangeable S-adenosyl-L-methionine.</text>
</comment>
<comment type="subunit">
    <text evidence="1">Monomer.</text>
</comment>
<comment type="subcellular location">
    <subcellularLocation>
        <location evidence="1">Cytoplasm</location>
    </subcellularLocation>
</comment>
<comment type="similarity">
    <text evidence="1">Belongs to the methylthiotransferase family. MiaB subfamily.</text>
</comment>
<accession>Q30PR1</accession>
<feature type="chain" id="PRO_0000374589" description="tRNA-2-methylthio-N(6)-dimethylallyladenosine synthase">
    <location>
        <begin position="1"/>
        <end position="435"/>
    </location>
</feature>
<feature type="domain" description="MTTase N-terminal" evidence="1">
    <location>
        <begin position="5"/>
        <end position="120"/>
    </location>
</feature>
<feature type="domain" description="Radical SAM core" evidence="2">
    <location>
        <begin position="138"/>
        <end position="372"/>
    </location>
</feature>
<feature type="domain" description="TRAM" evidence="1">
    <location>
        <begin position="374"/>
        <end position="435"/>
    </location>
</feature>
<feature type="binding site" evidence="1">
    <location>
        <position position="14"/>
    </location>
    <ligand>
        <name>[4Fe-4S] cluster</name>
        <dbReference type="ChEBI" id="CHEBI:49883"/>
        <label>1</label>
    </ligand>
</feature>
<feature type="binding site" evidence="1">
    <location>
        <position position="51"/>
    </location>
    <ligand>
        <name>[4Fe-4S] cluster</name>
        <dbReference type="ChEBI" id="CHEBI:49883"/>
        <label>1</label>
    </ligand>
</feature>
<feature type="binding site" evidence="1">
    <location>
        <position position="83"/>
    </location>
    <ligand>
        <name>[4Fe-4S] cluster</name>
        <dbReference type="ChEBI" id="CHEBI:49883"/>
        <label>1</label>
    </ligand>
</feature>
<feature type="binding site" evidence="1">
    <location>
        <position position="152"/>
    </location>
    <ligand>
        <name>[4Fe-4S] cluster</name>
        <dbReference type="ChEBI" id="CHEBI:49883"/>
        <label>2</label>
        <note>4Fe-4S-S-AdoMet</note>
    </ligand>
</feature>
<feature type="binding site" evidence="1">
    <location>
        <position position="156"/>
    </location>
    <ligand>
        <name>[4Fe-4S] cluster</name>
        <dbReference type="ChEBI" id="CHEBI:49883"/>
        <label>2</label>
        <note>4Fe-4S-S-AdoMet</note>
    </ligand>
</feature>
<feature type="binding site" evidence="1">
    <location>
        <position position="159"/>
    </location>
    <ligand>
        <name>[4Fe-4S] cluster</name>
        <dbReference type="ChEBI" id="CHEBI:49883"/>
        <label>2</label>
        <note>4Fe-4S-S-AdoMet</note>
    </ligand>
</feature>
<keyword id="KW-0004">4Fe-4S</keyword>
<keyword id="KW-0963">Cytoplasm</keyword>
<keyword id="KW-0408">Iron</keyword>
<keyword id="KW-0411">Iron-sulfur</keyword>
<keyword id="KW-0479">Metal-binding</keyword>
<keyword id="KW-1185">Reference proteome</keyword>
<keyword id="KW-0949">S-adenosyl-L-methionine</keyword>
<keyword id="KW-0808">Transferase</keyword>
<keyword id="KW-0819">tRNA processing</keyword>
<reference key="1">
    <citation type="journal article" date="2008" name="Appl. Environ. Microbiol.">
        <title>Genome of the epsilonproteobacterial chemolithoautotroph Sulfurimonas denitrificans.</title>
        <authorList>
            <person name="Sievert S.M."/>
            <person name="Scott K.M."/>
            <person name="Klotz M.G."/>
            <person name="Chain P.S.G."/>
            <person name="Hauser L.J."/>
            <person name="Hemp J."/>
            <person name="Huegler M."/>
            <person name="Land M."/>
            <person name="Lapidus A."/>
            <person name="Larimer F.W."/>
            <person name="Lucas S."/>
            <person name="Malfatti S.A."/>
            <person name="Meyer F."/>
            <person name="Paulsen I.T."/>
            <person name="Ren Q."/>
            <person name="Simon J."/>
            <person name="Bailey K."/>
            <person name="Diaz E."/>
            <person name="Fitzpatrick K.A."/>
            <person name="Glover B."/>
            <person name="Gwatney N."/>
            <person name="Korajkic A."/>
            <person name="Long A."/>
            <person name="Mobberley J.M."/>
            <person name="Pantry S.N."/>
            <person name="Pazder G."/>
            <person name="Peterson S."/>
            <person name="Quintanilla J.D."/>
            <person name="Sprinkle R."/>
            <person name="Stephens J."/>
            <person name="Thomas P."/>
            <person name="Vaughn R."/>
            <person name="Weber M.J."/>
            <person name="Wooten L.L."/>
        </authorList>
    </citation>
    <scope>NUCLEOTIDE SEQUENCE [LARGE SCALE GENOMIC DNA]</scope>
    <source>
        <strain>ATCC 33889 / DSM 1251</strain>
    </source>
</reference>
<protein>
    <recommendedName>
        <fullName evidence="1">tRNA-2-methylthio-N(6)-dimethylallyladenosine synthase</fullName>
        <ecNumber evidence="1">2.8.4.3</ecNumber>
    </recommendedName>
    <alternativeName>
        <fullName evidence="1">(Dimethylallyl)adenosine tRNA methylthiotransferase MiaB</fullName>
    </alternativeName>
    <alternativeName>
        <fullName evidence="1">tRNA-i(6)A37 methylthiotransferase</fullName>
    </alternativeName>
</protein>
<sequence length="435" mass="49352">MQGMKKLFIETLGCAMNSRDSEHMIAELSEKEGYETTNDLSSADLIIINTCSVREKPVAKLFSELGVFNKRKKEGAKIGVCGCTASHLGEEIIKRAPYVSFVLGARNVSKISEVLHKERAVEIDINYDESEFAFNDFRTSPYKAYINISIGCDKSCTYCIVPKTRGEEISIPTELILREAQKAVKGGAKEIFLLGQNVNNYGRRFSGEHEKVSFSELLRRLSKIDALERIRFTSPHPFHMDDEFIEEFSSNPKICKSMHMPLQSGSSKVLKDMKRGYTKEWFLNRVQKLRAMSPDVSISTDIIVAFPGESDEDFEETLSIMREVKFDQIFSFKYSPRPETEAEHFTNIVDEDVASSRLTTLQNLAVNILDEKNKTHLGKIYRVYFEDLNQDYYASGRSDNNLLIKVKGSDELLGEFRDVKITDIGRTILSGEIVG</sequence>
<name>MIAB_SULDN</name>